<organism>
    <name type="scientific">Chlorobaculum parvum (strain DSM 263 / NCIMB 8327)</name>
    <name type="common">Chlorobium vibrioforme subsp. thiosulfatophilum</name>
    <dbReference type="NCBI Taxonomy" id="517417"/>
    <lineage>
        <taxon>Bacteria</taxon>
        <taxon>Pseudomonadati</taxon>
        <taxon>Chlorobiota</taxon>
        <taxon>Chlorobiia</taxon>
        <taxon>Chlorobiales</taxon>
        <taxon>Chlorobiaceae</taxon>
        <taxon>Chlorobaculum</taxon>
    </lineage>
</organism>
<comment type="function">
    <text evidence="1">Protease subunit of a proteasome-like degradation complex believed to be a general protein degrading machinery.</text>
</comment>
<comment type="catalytic activity">
    <reaction evidence="1">
        <text>ATP-dependent cleavage of peptide bonds with broad specificity.</text>
        <dbReference type="EC" id="3.4.25.2"/>
    </reaction>
</comment>
<comment type="activity regulation">
    <text evidence="1">Allosterically activated by HslU binding.</text>
</comment>
<comment type="subunit">
    <text evidence="1">A double ring-shaped homohexamer of HslV is capped on each side by a ring-shaped HslU homohexamer. The assembly of the HslU/HslV complex is dependent on binding of ATP.</text>
</comment>
<comment type="subcellular location">
    <subcellularLocation>
        <location evidence="1">Cytoplasm</location>
    </subcellularLocation>
</comment>
<comment type="similarity">
    <text evidence="1">Belongs to the peptidase T1B family. HslV subfamily.</text>
</comment>
<name>HSLV_CHLP8</name>
<protein>
    <recommendedName>
        <fullName evidence="1">ATP-dependent protease subunit HslV</fullName>
        <ecNumber evidence="1">3.4.25.2</ecNumber>
    </recommendedName>
</protein>
<reference key="1">
    <citation type="submission" date="2008-06" db="EMBL/GenBank/DDBJ databases">
        <title>Complete sequence of Chlorobaculum parvum NCIB 8327.</title>
        <authorList>
            <consortium name="US DOE Joint Genome Institute"/>
            <person name="Lucas S."/>
            <person name="Copeland A."/>
            <person name="Lapidus A."/>
            <person name="Glavina del Rio T."/>
            <person name="Dalin E."/>
            <person name="Tice H."/>
            <person name="Bruce D."/>
            <person name="Goodwin L."/>
            <person name="Pitluck S."/>
            <person name="Schmutz J."/>
            <person name="Larimer F."/>
            <person name="Land M."/>
            <person name="Hauser L."/>
            <person name="Kyrpides N."/>
            <person name="Mikhailova N."/>
            <person name="Zhao F."/>
            <person name="Li T."/>
            <person name="Liu Z."/>
            <person name="Overmann J."/>
            <person name="Bryant D.A."/>
            <person name="Richardson P."/>
        </authorList>
    </citation>
    <scope>NUCLEOTIDE SEQUENCE [LARGE SCALE GENOMIC DNA]</scope>
    <source>
        <strain>DSM 263 / NCIMB 8327</strain>
    </source>
</reference>
<accession>B3QNN5</accession>
<feature type="chain" id="PRO_1000100885" description="ATP-dependent protease subunit HslV">
    <location>
        <begin position="1"/>
        <end position="181"/>
    </location>
</feature>
<feature type="active site" evidence="1">
    <location>
        <position position="11"/>
    </location>
</feature>
<feature type="binding site" evidence="1">
    <location>
        <position position="166"/>
    </location>
    <ligand>
        <name>Na(+)</name>
        <dbReference type="ChEBI" id="CHEBI:29101"/>
    </ligand>
</feature>
<feature type="binding site" evidence="1">
    <location>
        <position position="169"/>
    </location>
    <ligand>
        <name>Na(+)</name>
        <dbReference type="ChEBI" id="CHEBI:29101"/>
    </ligand>
</feature>
<feature type="binding site" evidence="1">
    <location>
        <position position="172"/>
    </location>
    <ligand>
        <name>Na(+)</name>
        <dbReference type="ChEBI" id="CHEBI:29101"/>
    </ligand>
</feature>
<proteinExistence type="inferred from homology"/>
<keyword id="KW-0021">Allosteric enzyme</keyword>
<keyword id="KW-0963">Cytoplasm</keyword>
<keyword id="KW-0378">Hydrolase</keyword>
<keyword id="KW-0479">Metal-binding</keyword>
<keyword id="KW-0645">Protease</keyword>
<keyword id="KW-0915">Sodium</keyword>
<keyword id="KW-0888">Threonine protease</keyword>
<gene>
    <name evidence="1" type="primary">hslV</name>
    <name type="ordered locus">Cpar_1132</name>
</gene>
<dbReference type="EC" id="3.4.25.2" evidence="1"/>
<dbReference type="EMBL" id="CP001099">
    <property type="protein sequence ID" value="ACF11538.1"/>
    <property type="molecule type" value="Genomic_DNA"/>
</dbReference>
<dbReference type="RefSeq" id="WP_012502371.1">
    <property type="nucleotide sequence ID" value="NC_011027.1"/>
</dbReference>
<dbReference type="SMR" id="B3QNN5"/>
<dbReference type="STRING" id="517417.Cpar_1132"/>
<dbReference type="KEGG" id="cpc:Cpar_1132"/>
<dbReference type="eggNOG" id="COG5405">
    <property type="taxonomic scope" value="Bacteria"/>
</dbReference>
<dbReference type="HOGENOM" id="CLU_093872_1_0_10"/>
<dbReference type="OrthoDB" id="9804884at2"/>
<dbReference type="Proteomes" id="UP000008811">
    <property type="component" value="Chromosome"/>
</dbReference>
<dbReference type="GO" id="GO:0009376">
    <property type="term" value="C:HslUV protease complex"/>
    <property type="evidence" value="ECO:0007669"/>
    <property type="project" value="UniProtKB-UniRule"/>
</dbReference>
<dbReference type="GO" id="GO:0005839">
    <property type="term" value="C:proteasome core complex"/>
    <property type="evidence" value="ECO:0007669"/>
    <property type="project" value="InterPro"/>
</dbReference>
<dbReference type="GO" id="GO:0046872">
    <property type="term" value="F:metal ion binding"/>
    <property type="evidence" value="ECO:0007669"/>
    <property type="project" value="UniProtKB-KW"/>
</dbReference>
<dbReference type="GO" id="GO:0004298">
    <property type="term" value="F:threonine-type endopeptidase activity"/>
    <property type="evidence" value="ECO:0007669"/>
    <property type="project" value="UniProtKB-KW"/>
</dbReference>
<dbReference type="GO" id="GO:0051603">
    <property type="term" value="P:proteolysis involved in protein catabolic process"/>
    <property type="evidence" value="ECO:0007669"/>
    <property type="project" value="InterPro"/>
</dbReference>
<dbReference type="CDD" id="cd01913">
    <property type="entry name" value="protease_HslV"/>
    <property type="match status" value="1"/>
</dbReference>
<dbReference type="Gene3D" id="3.60.20.10">
    <property type="entry name" value="Glutamine Phosphoribosylpyrophosphate, subunit 1, domain 1"/>
    <property type="match status" value="1"/>
</dbReference>
<dbReference type="HAMAP" id="MF_00248">
    <property type="entry name" value="HslV"/>
    <property type="match status" value="1"/>
</dbReference>
<dbReference type="InterPro" id="IPR022281">
    <property type="entry name" value="ATP-dep_Prtase_HsIV_su"/>
</dbReference>
<dbReference type="InterPro" id="IPR029055">
    <property type="entry name" value="Ntn_hydrolases_N"/>
</dbReference>
<dbReference type="InterPro" id="IPR001353">
    <property type="entry name" value="Proteasome_sua/b"/>
</dbReference>
<dbReference type="InterPro" id="IPR023333">
    <property type="entry name" value="Proteasome_suB-type"/>
</dbReference>
<dbReference type="NCBIfam" id="TIGR03692">
    <property type="entry name" value="ATP_dep_HslV"/>
    <property type="match status" value="1"/>
</dbReference>
<dbReference type="NCBIfam" id="NF003964">
    <property type="entry name" value="PRK05456.1"/>
    <property type="match status" value="1"/>
</dbReference>
<dbReference type="PANTHER" id="PTHR32194:SF0">
    <property type="entry name" value="ATP-DEPENDENT PROTEASE SUBUNIT HSLV"/>
    <property type="match status" value="1"/>
</dbReference>
<dbReference type="PANTHER" id="PTHR32194">
    <property type="entry name" value="METALLOPROTEASE TLDD"/>
    <property type="match status" value="1"/>
</dbReference>
<dbReference type="Pfam" id="PF00227">
    <property type="entry name" value="Proteasome"/>
    <property type="match status" value="1"/>
</dbReference>
<dbReference type="PIRSF" id="PIRSF039093">
    <property type="entry name" value="HslV"/>
    <property type="match status" value="1"/>
</dbReference>
<dbReference type="SUPFAM" id="SSF56235">
    <property type="entry name" value="N-terminal nucleophile aminohydrolases (Ntn hydrolases)"/>
    <property type="match status" value="1"/>
</dbReference>
<dbReference type="PROSITE" id="PS51476">
    <property type="entry name" value="PROTEASOME_BETA_2"/>
    <property type="match status" value="1"/>
</dbReference>
<sequence>MGQQKPQIRSTTVLGVLRDGKAALGSDGQMTLGNTVMKHSTRKIRSLYQGKFVTGFAGATADALTLLERFEAKLEAYSGRLDRAAVELAKDWRTDKYLRRLEAMLAVVSSDKALIISGTGDVIEPEDGIVAIGSGSMYALAAARALMKHTTLSAEEIVRESLQTAAEICIYTNDHIAIETL</sequence>
<evidence type="ECO:0000255" key="1">
    <source>
        <dbReference type="HAMAP-Rule" id="MF_00248"/>
    </source>
</evidence>